<name>IF5A_ARCFU</name>
<dbReference type="EMBL" id="AE000782">
    <property type="protein sequence ID" value="AAB90593.1"/>
    <property type="molecule type" value="Genomic_DNA"/>
</dbReference>
<dbReference type="PIR" id="E69330">
    <property type="entry name" value="E69330"/>
</dbReference>
<dbReference type="RefSeq" id="WP_010878148.1">
    <property type="nucleotide sequence ID" value="NC_000917.1"/>
</dbReference>
<dbReference type="SMR" id="O29612"/>
<dbReference type="STRING" id="224325.AF_0645"/>
<dbReference type="PaxDb" id="224325-AF_0645"/>
<dbReference type="EnsemblBacteria" id="AAB90593">
    <property type="protein sequence ID" value="AAB90593"/>
    <property type="gene ID" value="AF_0645"/>
</dbReference>
<dbReference type="GeneID" id="24794245"/>
<dbReference type="KEGG" id="afu:AF_0645"/>
<dbReference type="eggNOG" id="arCOG04277">
    <property type="taxonomic scope" value="Archaea"/>
</dbReference>
<dbReference type="HOGENOM" id="CLU_102600_3_0_2"/>
<dbReference type="OrthoDB" id="23689at2157"/>
<dbReference type="PhylomeDB" id="O29612"/>
<dbReference type="Proteomes" id="UP000002199">
    <property type="component" value="Chromosome"/>
</dbReference>
<dbReference type="GO" id="GO:0005737">
    <property type="term" value="C:cytoplasm"/>
    <property type="evidence" value="ECO:0007669"/>
    <property type="project" value="UniProtKB-SubCell"/>
</dbReference>
<dbReference type="GO" id="GO:0043022">
    <property type="term" value="F:ribosome binding"/>
    <property type="evidence" value="ECO:0007669"/>
    <property type="project" value="InterPro"/>
</dbReference>
<dbReference type="GO" id="GO:0003723">
    <property type="term" value="F:RNA binding"/>
    <property type="evidence" value="ECO:0007669"/>
    <property type="project" value="InterPro"/>
</dbReference>
<dbReference type="GO" id="GO:0003746">
    <property type="term" value="F:translation elongation factor activity"/>
    <property type="evidence" value="ECO:0007669"/>
    <property type="project" value="InterPro"/>
</dbReference>
<dbReference type="GO" id="GO:0003743">
    <property type="term" value="F:translation initiation factor activity"/>
    <property type="evidence" value="ECO:0007669"/>
    <property type="project" value="UniProtKB-UniRule"/>
</dbReference>
<dbReference type="GO" id="GO:0045901">
    <property type="term" value="P:positive regulation of translational elongation"/>
    <property type="evidence" value="ECO:0007669"/>
    <property type="project" value="InterPro"/>
</dbReference>
<dbReference type="GO" id="GO:0045905">
    <property type="term" value="P:positive regulation of translational termination"/>
    <property type="evidence" value="ECO:0007669"/>
    <property type="project" value="InterPro"/>
</dbReference>
<dbReference type="CDD" id="cd04467">
    <property type="entry name" value="S1_aIF5A"/>
    <property type="match status" value="1"/>
</dbReference>
<dbReference type="FunFam" id="2.30.30.30:FF:000038">
    <property type="entry name" value="Translation initiation factor 5A"/>
    <property type="match status" value="1"/>
</dbReference>
<dbReference type="Gene3D" id="2.30.30.30">
    <property type="match status" value="1"/>
</dbReference>
<dbReference type="Gene3D" id="2.40.50.140">
    <property type="entry name" value="Nucleic acid-binding proteins"/>
    <property type="match status" value="1"/>
</dbReference>
<dbReference type="HAMAP" id="MF_00085">
    <property type="entry name" value="eIF_5A"/>
    <property type="match status" value="1"/>
</dbReference>
<dbReference type="InterPro" id="IPR001884">
    <property type="entry name" value="IF5A-like"/>
</dbReference>
<dbReference type="InterPro" id="IPR048670">
    <property type="entry name" value="IF5A-like_N"/>
</dbReference>
<dbReference type="InterPro" id="IPR012340">
    <property type="entry name" value="NA-bd_OB-fold"/>
</dbReference>
<dbReference type="InterPro" id="IPR014722">
    <property type="entry name" value="Rib_uL2_dom2"/>
</dbReference>
<dbReference type="InterPro" id="IPR019769">
    <property type="entry name" value="Trans_elong_IF5A_hypusine_site"/>
</dbReference>
<dbReference type="InterPro" id="IPR022847">
    <property type="entry name" value="Transl_elong_IF5A_arc"/>
</dbReference>
<dbReference type="InterPro" id="IPR020189">
    <property type="entry name" value="Transl_elong_IF5A_C"/>
</dbReference>
<dbReference type="InterPro" id="IPR008991">
    <property type="entry name" value="Translation_prot_SH3-like_sf"/>
</dbReference>
<dbReference type="NCBIfam" id="TIGR00037">
    <property type="entry name" value="eIF_5A"/>
    <property type="match status" value="1"/>
</dbReference>
<dbReference type="NCBIfam" id="NF003076">
    <property type="entry name" value="PRK03999.1"/>
    <property type="match status" value="1"/>
</dbReference>
<dbReference type="PANTHER" id="PTHR11673">
    <property type="entry name" value="TRANSLATION INITIATION FACTOR 5A FAMILY MEMBER"/>
    <property type="match status" value="1"/>
</dbReference>
<dbReference type="Pfam" id="PF01287">
    <property type="entry name" value="eIF-5a"/>
    <property type="match status" value="1"/>
</dbReference>
<dbReference type="Pfam" id="PF21485">
    <property type="entry name" value="IF5A-like_N"/>
    <property type="match status" value="1"/>
</dbReference>
<dbReference type="PIRSF" id="PIRSF003025">
    <property type="entry name" value="eIF5A"/>
    <property type="match status" value="1"/>
</dbReference>
<dbReference type="SMART" id="SM01376">
    <property type="entry name" value="eIF-5a"/>
    <property type="match status" value="1"/>
</dbReference>
<dbReference type="SUPFAM" id="SSF50249">
    <property type="entry name" value="Nucleic acid-binding proteins"/>
    <property type="match status" value="1"/>
</dbReference>
<dbReference type="SUPFAM" id="SSF50104">
    <property type="entry name" value="Translation proteins SH3-like domain"/>
    <property type="match status" value="1"/>
</dbReference>
<dbReference type="PROSITE" id="PS00302">
    <property type="entry name" value="IF5A_HYPUSINE"/>
    <property type="match status" value="1"/>
</dbReference>
<gene>
    <name type="primary">eif5a</name>
    <name type="ordered locus">AF_0645</name>
</gene>
<keyword id="KW-0963">Cytoplasm</keyword>
<keyword id="KW-0385">Hypusine</keyword>
<keyword id="KW-0396">Initiation factor</keyword>
<keyword id="KW-0648">Protein biosynthesis</keyword>
<keyword id="KW-1185">Reference proteome</keyword>
<proteinExistence type="inferred from homology"/>
<accession>O29612</accession>
<organism>
    <name type="scientific">Archaeoglobus fulgidus (strain ATCC 49558 / DSM 4304 / JCM 9628 / NBRC 100126 / VC-16)</name>
    <dbReference type="NCBI Taxonomy" id="224325"/>
    <lineage>
        <taxon>Archaea</taxon>
        <taxon>Methanobacteriati</taxon>
        <taxon>Methanobacteriota</taxon>
        <taxon>Archaeoglobi</taxon>
        <taxon>Archaeoglobales</taxon>
        <taxon>Archaeoglobaceae</taxon>
        <taxon>Archaeoglobus</taxon>
    </lineage>
</organism>
<protein>
    <recommendedName>
        <fullName>Translation initiation factor 5A</fullName>
    </recommendedName>
    <alternativeName>
        <fullName>Hypusine-containing protein</fullName>
    </alternativeName>
    <alternativeName>
        <fullName>eIF-5A</fullName>
    </alternativeName>
</protein>
<sequence length="128" mass="14502">MKQQVEVRQLREGGYVVIDDEPCEILSISVSKPGKHGAAKARIDAIGIFDSQKRSIVQPVTAKIYVPIVERKRAQIISVTGNVAQLMDLETYETFELEVPEELKDKMEQGREVIYLESLGKRKIERMA</sequence>
<reference key="1">
    <citation type="journal article" date="1997" name="Nature">
        <title>The complete genome sequence of the hyperthermophilic, sulphate-reducing archaeon Archaeoglobus fulgidus.</title>
        <authorList>
            <person name="Klenk H.-P."/>
            <person name="Clayton R.A."/>
            <person name="Tomb J.-F."/>
            <person name="White O."/>
            <person name="Nelson K.E."/>
            <person name="Ketchum K.A."/>
            <person name="Dodson R.J."/>
            <person name="Gwinn M.L."/>
            <person name="Hickey E.K."/>
            <person name="Peterson J.D."/>
            <person name="Richardson D.L."/>
            <person name="Kerlavage A.R."/>
            <person name="Graham D.E."/>
            <person name="Kyrpides N.C."/>
            <person name="Fleischmann R.D."/>
            <person name="Quackenbush J."/>
            <person name="Lee N.H."/>
            <person name="Sutton G.G."/>
            <person name="Gill S.R."/>
            <person name="Kirkness E.F."/>
            <person name="Dougherty B.A."/>
            <person name="McKenney K."/>
            <person name="Adams M.D."/>
            <person name="Loftus B.J."/>
            <person name="Peterson S.N."/>
            <person name="Reich C.I."/>
            <person name="McNeil L.K."/>
            <person name="Badger J.H."/>
            <person name="Glodek A."/>
            <person name="Zhou L."/>
            <person name="Overbeek R."/>
            <person name="Gocayne J.D."/>
            <person name="Weidman J.F."/>
            <person name="McDonald L.A."/>
            <person name="Utterback T.R."/>
            <person name="Cotton M.D."/>
            <person name="Spriggs T."/>
            <person name="Artiach P."/>
            <person name="Kaine B.P."/>
            <person name="Sykes S.M."/>
            <person name="Sadow P.W."/>
            <person name="D'Andrea K.P."/>
            <person name="Bowman C."/>
            <person name="Fujii C."/>
            <person name="Garland S.A."/>
            <person name="Mason T.M."/>
            <person name="Olsen G.J."/>
            <person name="Fraser C.M."/>
            <person name="Smith H.O."/>
            <person name="Woese C.R."/>
            <person name="Venter J.C."/>
        </authorList>
    </citation>
    <scope>NUCLEOTIDE SEQUENCE [LARGE SCALE GENOMIC DNA]</scope>
    <source>
        <strain>ATCC 49558 / DSM 4304 / JCM 9628 / NBRC 100126 / VC-16</strain>
    </source>
</reference>
<feature type="chain" id="PRO_0000142490" description="Translation initiation factor 5A">
    <location>
        <begin position="1"/>
        <end position="128"/>
    </location>
</feature>
<feature type="modified residue" description="Hypusine" evidence="1">
    <location>
        <position position="35"/>
    </location>
</feature>
<comment type="function">
    <text evidence="1">Functions by promoting the formation of the first peptide bond.</text>
</comment>
<comment type="subcellular location">
    <subcellularLocation>
        <location evidence="1">Cytoplasm</location>
    </subcellularLocation>
</comment>
<comment type="similarity">
    <text evidence="2">Belongs to the eIF-5A family.</text>
</comment>
<evidence type="ECO:0000250" key="1"/>
<evidence type="ECO:0000305" key="2"/>